<gene>
    <name evidence="1" type="primary">nrdR</name>
    <name type="ordered locus">Kole_2031</name>
</gene>
<comment type="function">
    <text evidence="1">Negatively regulates transcription of bacterial ribonucleotide reductase nrd genes and operons by binding to NrdR-boxes.</text>
</comment>
<comment type="cofactor">
    <cofactor evidence="1">
        <name>Zn(2+)</name>
        <dbReference type="ChEBI" id="CHEBI:29105"/>
    </cofactor>
    <text evidence="1">Binds 1 zinc ion.</text>
</comment>
<comment type="similarity">
    <text evidence="1">Belongs to the NrdR family.</text>
</comment>
<dbReference type="EMBL" id="CP001634">
    <property type="protein sequence ID" value="ACR80709.1"/>
    <property type="molecule type" value="Genomic_DNA"/>
</dbReference>
<dbReference type="RefSeq" id="WP_015869350.1">
    <property type="nucleotide sequence ID" value="NC_012785.1"/>
</dbReference>
<dbReference type="SMR" id="C5CHN3"/>
<dbReference type="STRING" id="521045.Kole_2031"/>
<dbReference type="KEGG" id="kol:Kole_2031"/>
<dbReference type="eggNOG" id="COG1327">
    <property type="taxonomic scope" value="Bacteria"/>
</dbReference>
<dbReference type="HOGENOM" id="CLU_108412_0_0_0"/>
<dbReference type="OrthoDB" id="9807461at2"/>
<dbReference type="Proteomes" id="UP000002382">
    <property type="component" value="Chromosome"/>
</dbReference>
<dbReference type="GO" id="GO:0005524">
    <property type="term" value="F:ATP binding"/>
    <property type="evidence" value="ECO:0007669"/>
    <property type="project" value="UniProtKB-KW"/>
</dbReference>
<dbReference type="GO" id="GO:0003677">
    <property type="term" value="F:DNA binding"/>
    <property type="evidence" value="ECO:0007669"/>
    <property type="project" value="UniProtKB-KW"/>
</dbReference>
<dbReference type="GO" id="GO:0008270">
    <property type="term" value="F:zinc ion binding"/>
    <property type="evidence" value="ECO:0007669"/>
    <property type="project" value="UniProtKB-UniRule"/>
</dbReference>
<dbReference type="GO" id="GO:0045892">
    <property type="term" value="P:negative regulation of DNA-templated transcription"/>
    <property type="evidence" value="ECO:0007669"/>
    <property type="project" value="UniProtKB-UniRule"/>
</dbReference>
<dbReference type="HAMAP" id="MF_00440">
    <property type="entry name" value="NrdR"/>
    <property type="match status" value="1"/>
</dbReference>
<dbReference type="InterPro" id="IPR005144">
    <property type="entry name" value="ATP-cone_dom"/>
</dbReference>
<dbReference type="InterPro" id="IPR055173">
    <property type="entry name" value="NrdR-like_N"/>
</dbReference>
<dbReference type="InterPro" id="IPR003796">
    <property type="entry name" value="RNR_NrdR-like"/>
</dbReference>
<dbReference type="NCBIfam" id="TIGR00244">
    <property type="entry name" value="transcriptional regulator NrdR"/>
    <property type="match status" value="1"/>
</dbReference>
<dbReference type="PANTHER" id="PTHR30455">
    <property type="entry name" value="TRANSCRIPTIONAL REPRESSOR NRDR"/>
    <property type="match status" value="1"/>
</dbReference>
<dbReference type="PANTHER" id="PTHR30455:SF2">
    <property type="entry name" value="TRANSCRIPTIONAL REPRESSOR NRDR"/>
    <property type="match status" value="1"/>
</dbReference>
<dbReference type="Pfam" id="PF03477">
    <property type="entry name" value="ATP-cone"/>
    <property type="match status" value="1"/>
</dbReference>
<dbReference type="Pfam" id="PF22811">
    <property type="entry name" value="Zn_ribbon_NrdR"/>
    <property type="match status" value="1"/>
</dbReference>
<dbReference type="PROSITE" id="PS51161">
    <property type="entry name" value="ATP_CONE"/>
    <property type="match status" value="1"/>
</dbReference>
<keyword id="KW-0067">ATP-binding</keyword>
<keyword id="KW-0238">DNA-binding</keyword>
<keyword id="KW-0479">Metal-binding</keyword>
<keyword id="KW-0547">Nucleotide-binding</keyword>
<keyword id="KW-1185">Reference proteome</keyword>
<keyword id="KW-0678">Repressor</keyword>
<keyword id="KW-0804">Transcription</keyword>
<keyword id="KW-0805">Transcription regulation</keyword>
<keyword id="KW-0862">Zinc</keyword>
<keyword id="KW-0863">Zinc-finger</keyword>
<sequence length="158" mass="18878">MKCPFCNSEETRVIDTRLTDDGHVVRRRRECEHCGGRFTTYERFEQKPIFVVKKGGQRERFDRNKVLNGILKACEKRPVSIEEIENMSSEIEQEVLRSGKAEISSKEIGEMVMEKLKRKDRVAYVRFASVYKEFRDLDHFMDIIRELKDELKKRDRRD</sequence>
<protein>
    <recommendedName>
        <fullName evidence="1">Transcriptional repressor NrdR</fullName>
    </recommendedName>
</protein>
<name>NRDR_KOSOT</name>
<proteinExistence type="inferred from homology"/>
<organism>
    <name type="scientific">Kosmotoga olearia (strain ATCC BAA-1733 / DSM 21960 / TBF 19.5.1)</name>
    <dbReference type="NCBI Taxonomy" id="521045"/>
    <lineage>
        <taxon>Bacteria</taxon>
        <taxon>Thermotogati</taxon>
        <taxon>Thermotogota</taxon>
        <taxon>Thermotogae</taxon>
        <taxon>Kosmotogales</taxon>
        <taxon>Kosmotogaceae</taxon>
        <taxon>Kosmotoga</taxon>
    </lineage>
</organism>
<evidence type="ECO:0000255" key="1">
    <source>
        <dbReference type="HAMAP-Rule" id="MF_00440"/>
    </source>
</evidence>
<accession>C5CHN3</accession>
<feature type="chain" id="PRO_1000206121" description="Transcriptional repressor NrdR">
    <location>
        <begin position="1"/>
        <end position="158"/>
    </location>
</feature>
<feature type="domain" description="ATP-cone" evidence="1">
    <location>
        <begin position="49"/>
        <end position="139"/>
    </location>
</feature>
<feature type="zinc finger region" evidence="1">
    <location>
        <begin position="3"/>
        <end position="34"/>
    </location>
</feature>
<reference key="1">
    <citation type="submission" date="2009-06" db="EMBL/GenBank/DDBJ databases">
        <title>Complete sequence of Thermotogales bacterium TBF 19.5.1.</title>
        <authorList>
            <consortium name="US DOE Joint Genome Institute"/>
            <person name="Lucas S."/>
            <person name="Copeland A."/>
            <person name="Lapidus A."/>
            <person name="Glavina del Rio T."/>
            <person name="Tice H."/>
            <person name="Bruce D."/>
            <person name="Goodwin L."/>
            <person name="Pitluck S."/>
            <person name="Chertkov O."/>
            <person name="Brettin T."/>
            <person name="Detter J.C."/>
            <person name="Han C."/>
            <person name="Schmutz J."/>
            <person name="Larimer F."/>
            <person name="Land M."/>
            <person name="Hauser L."/>
            <person name="Kyrpides N."/>
            <person name="Ovchinnikova G."/>
            <person name="Noll K."/>
        </authorList>
    </citation>
    <scope>NUCLEOTIDE SEQUENCE [LARGE SCALE GENOMIC DNA]</scope>
    <source>
        <strain>ATCC BAA-1733 / DSM 21960 / TBF 19.5.1</strain>
    </source>
</reference>